<proteinExistence type="inferred from homology"/>
<name>GLPB_ECODH</name>
<organism>
    <name type="scientific">Escherichia coli (strain K12 / DH10B)</name>
    <dbReference type="NCBI Taxonomy" id="316385"/>
    <lineage>
        <taxon>Bacteria</taxon>
        <taxon>Pseudomonadati</taxon>
        <taxon>Pseudomonadota</taxon>
        <taxon>Gammaproteobacteria</taxon>
        <taxon>Enterobacterales</taxon>
        <taxon>Enterobacteriaceae</taxon>
        <taxon>Escherichia</taxon>
    </lineage>
</organism>
<gene>
    <name evidence="1" type="primary">glpB</name>
    <name type="ordered locus">ECDH10B_2401</name>
</gene>
<protein>
    <recommendedName>
        <fullName evidence="1">Anaerobic glycerol-3-phosphate dehydrogenase subunit B</fullName>
        <shortName evidence="1">Anaerobic G-3-P dehydrogenase subunit B</shortName>
        <shortName evidence="1">Anaerobic G3Pdhase B</shortName>
        <ecNumber evidence="1">1.1.5.3</ecNumber>
    </recommendedName>
</protein>
<feature type="chain" id="PRO_1000133359" description="Anaerobic glycerol-3-phosphate dehydrogenase subunit B">
    <location>
        <begin position="1"/>
        <end position="419"/>
    </location>
</feature>
<sequence length="419" mass="45357">MRFDTVIMGGGLAGLLCGLQLQKHGLRCAIVTRGQSALHFSSGSLDLLSHLPDGQPVTDIHSGLESLRQQAPAHPYSLLEPQRVLDLACQAQALIAESGAQLQGSVELAHQRVTPLGTLRSTWLSSPEVPVWPLPAKKICVVGISGLMDFQAHLAAASLRELGLAVETAEIELPELDVLRNNATEFRAVNIARFLDNEENWPLLLDALIPVANTCEMILMPACFGLADDKLWRWLNEKLPCSLMLLPTLPPSVLGIRLQNQLQRQFVRQGGVWMPGDEVKKVTCKNGVVNEIWTRNHADIPLRPRFAVLASGSFFSGGLVAERNGIREPILGLDVLQTATRGEWYKGDFFAPQPWQQFGVTTDETLRPSQAGQTIENLFAIGSVLGGFDPIAQGCGGGVCAVSALHAAQQIAQRAGGQQ</sequence>
<keyword id="KW-0285">Flavoprotein</keyword>
<keyword id="KW-0288">FMN</keyword>
<keyword id="KW-0560">Oxidoreductase</keyword>
<evidence type="ECO:0000255" key="1">
    <source>
        <dbReference type="HAMAP-Rule" id="MF_00753"/>
    </source>
</evidence>
<reference key="1">
    <citation type="journal article" date="2008" name="J. Bacteriol.">
        <title>The complete genome sequence of Escherichia coli DH10B: insights into the biology of a laboratory workhorse.</title>
        <authorList>
            <person name="Durfee T."/>
            <person name="Nelson R."/>
            <person name="Baldwin S."/>
            <person name="Plunkett G. III"/>
            <person name="Burland V."/>
            <person name="Mau B."/>
            <person name="Petrosino J.F."/>
            <person name="Qin X."/>
            <person name="Muzny D.M."/>
            <person name="Ayele M."/>
            <person name="Gibbs R.A."/>
            <person name="Csorgo B."/>
            <person name="Posfai G."/>
            <person name="Weinstock G.M."/>
            <person name="Blattner F.R."/>
        </authorList>
    </citation>
    <scope>NUCLEOTIDE SEQUENCE [LARGE SCALE GENOMIC DNA]</scope>
    <source>
        <strain>K12 / DH10B</strain>
    </source>
</reference>
<comment type="function">
    <text evidence="1">Conversion of glycerol 3-phosphate to dihydroxyacetone. Uses fumarate or nitrate as electron acceptor.</text>
</comment>
<comment type="catalytic activity">
    <reaction evidence="1">
        <text>a quinone + sn-glycerol 3-phosphate = dihydroxyacetone phosphate + a quinol</text>
        <dbReference type="Rhea" id="RHEA:18977"/>
        <dbReference type="ChEBI" id="CHEBI:24646"/>
        <dbReference type="ChEBI" id="CHEBI:57597"/>
        <dbReference type="ChEBI" id="CHEBI:57642"/>
        <dbReference type="ChEBI" id="CHEBI:132124"/>
        <dbReference type="EC" id="1.1.5.3"/>
    </reaction>
</comment>
<comment type="cofactor">
    <cofactor evidence="1">
        <name>FMN</name>
        <dbReference type="ChEBI" id="CHEBI:58210"/>
    </cofactor>
</comment>
<comment type="pathway">
    <text evidence="1">Polyol metabolism; glycerol degradation via glycerol kinase pathway; glycerone phosphate from sn-glycerol 3-phosphate (anaerobic route): step 1/1.</text>
</comment>
<comment type="subunit">
    <text evidence="1">Composed of a catalytic GlpA/B dimer and of membrane bound GlpC.</text>
</comment>
<comment type="similarity">
    <text evidence="1">Belongs to the anaerobic G-3-P dehydrogenase subunit B family.</text>
</comment>
<accession>B1X8D6</accession>
<dbReference type="EC" id="1.1.5.3" evidence="1"/>
<dbReference type="EMBL" id="CP000948">
    <property type="protein sequence ID" value="ACB03402.1"/>
    <property type="molecule type" value="Genomic_DNA"/>
</dbReference>
<dbReference type="RefSeq" id="WP_001209927.1">
    <property type="nucleotide sequence ID" value="NC_010473.1"/>
</dbReference>
<dbReference type="KEGG" id="ecd:ECDH10B_2401"/>
<dbReference type="HOGENOM" id="CLU_047793_0_0_6"/>
<dbReference type="UniPathway" id="UPA00618">
    <property type="reaction ID" value="UER00673"/>
</dbReference>
<dbReference type="GO" id="GO:0009331">
    <property type="term" value="C:glycerol-3-phosphate dehydrogenase (FAD) complex"/>
    <property type="evidence" value="ECO:0007669"/>
    <property type="project" value="InterPro"/>
</dbReference>
<dbReference type="GO" id="GO:0004368">
    <property type="term" value="F:glycerol-3-phosphate dehydrogenase (quinone) activity"/>
    <property type="evidence" value="ECO:0007669"/>
    <property type="project" value="UniProtKB-UniRule"/>
</dbReference>
<dbReference type="GO" id="GO:0009061">
    <property type="term" value="P:anaerobic respiration"/>
    <property type="evidence" value="ECO:0007669"/>
    <property type="project" value="TreeGrafter"/>
</dbReference>
<dbReference type="GO" id="GO:0019563">
    <property type="term" value="P:glycerol catabolic process"/>
    <property type="evidence" value="ECO:0007669"/>
    <property type="project" value="UniProtKB-UniRule"/>
</dbReference>
<dbReference type="GO" id="GO:0046168">
    <property type="term" value="P:glycerol-3-phosphate catabolic process"/>
    <property type="evidence" value="ECO:0007669"/>
    <property type="project" value="TreeGrafter"/>
</dbReference>
<dbReference type="Gene3D" id="3.50.50.60">
    <property type="entry name" value="FAD/NAD(P)-binding domain"/>
    <property type="match status" value="1"/>
</dbReference>
<dbReference type="HAMAP" id="MF_00753">
    <property type="entry name" value="Glycerol3P_GlpB"/>
    <property type="match status" value="1"/>
</dbReference>
<dbReference type="InterPro" id="IPR003953">
    <property type="entry name" value="FAD-dep_OxRdtase_2_FAD-bd"/>
</dbReference>
<dbReference type="InterPro" id="IPR050315">
    <property type="entry name" value="FAD-oxidoreductase_2"/>
</dbReference>
<dbReference type="InterPro" id="IPR036188">
    <property type="entry name" value="FAD/NAD-bd_sf"/>
</dbReference>
<dbReference type="InterPro" id="IPR009158">
    <property type="entry name" value="G3P_DH_GlpB_su"/>
</dbReference>
<dbReference type="NCBIfam" id="TIGR03378">
    <property type="entry name" value="glycerol3P_GlpB"/>
    <property type="match status" value="1"/>
</dbReference>
<dbReference type="NCBIfam" id="NF003718">
    <property type="entry name" value="PRK05329.1-1"/>
    <property type="match status" value="1"/>
</dbReference>
<dbReference type="NCBIfam" id="NF003719">
    <property type="entry name" value="PRK05329.1-2"/>
    <property type="match status" value="1"/>
</dbReference>
<dbReference type="NCBIfam" id="NF003720">
    <property type="entry name" value="PRK05329.1-3"/>
    <property type="match status" value="1"/>
</dbReference>
<dbReference type="PANTHER" id="PTHR43400:SF11">
    <property type="entry name" value="ANAEROBIC GLYCEROL-3-PHOSPHATE DEHYDROGENASE SUBUNIT B"/>
    <property type="match status" value="1"/>
</dbReference>
<dbReference type="PANTHER" id="PTHR43400">
    <property type="entry name" value="FUMARATE REDUCTASE"/>
    <property type="match status" value="1"/>
</dbReference>
<dbReference type="Pfam" id="PF00890">
    <property type="entry name" value="FAD_binding_2"/>
    <property type="match status" value="1"/>
</dbReference>
<dbReference type="PIRSF" id="PIRSF000141">
    <property type="entry name" value="Anaerobic_G3P_dh"/>
    <property type="match status" value="1"/>
</dbReference>
<dbReference type="SUPFAM" id="SSF51905">
    <property type="entry name" value="FAD/NAD(P)-binding domain"/>
    <property type="match status" value="1"/>
</dbReference>